<gene>
    <name type="primary">bphD</name>
</gene>
<feature type="chain" id="PRO_0000373815" description="2-hydroxy-6-oxo-6-phenylhexa-2,4-dienoate hydrolase">
    <location>
        <begin position="1"/>
        <end position="286"/>
    </location>
</feature>
<feature type="active site" description="Proton acceptor" evidence="1">
    <location>
        <position position="265"/>
    </location>
</feature>
<feature type="binding site" evidence="1">
    <location>
        <begin position="42"/>
        <end position="43"/>
    </location>
    <ligand>
        <name>substrate</name>
    </ligand>
</feature>
<feature type="binding site" evidence="1">
    <location>
        <position position="51"/>
    </location>
    <ligand>
        <name>substrate</name>
    </ligand>
</feature>
<feature type="binding site" evidence="1">
    <location>
        <position position="111"/>
    </location>
    <ligand>
        <name>substrate</name>
    </ligand>
</feature>
<feature type="binding site" evidence="1">
    <location>
        <position position="180"/>
    </location>
    <ligand>
        <name>substrate</name>
    </ligand>
</feature>
<feature type="binding site" evidence="1">
    <location>
        <position position="190"/>
    </location>
    <ligand>
        <name>substrate</name>
    </ligand>
</feature>
<feature type="binding site" evidence="1">
    <location>
        <position position="266"/>
    </location>
    <ligand>
        <name>substrate</name>
    </ligand>
</feature>
<feature type="site" description="Transition state stabilizer" evidence="1">
    <location>
        <position position="112"/>
    </location>
</feature>
<sequence>MTALTESSTSKFLNIKEKGLSDFKIHYNEAGNGETVIMLHGGGPGAGGWSNYYRNIGPFVEAGYRVILKDSPGFNKSDAVVMDEQRGLVNARAVKGLMDALGIDRAHLVGNSMGGATALNFAIEYPDRIGKLILMGPGGLGPSMFAPMPLEGIKLLFKLYAEPSYENLKQMIQVFLYDQSLITEELLQGRWEAIQRQPEHLKNFLISAQKAPLSTWDVTARLGEIKAKTFITWGRDDRFVPLDHGLKLLWNIDDARLHVFSKCGHWAQWEHADEFNRLAIDFLRQA</sequence>
<dbReference type="EC" id="3.7.1.8"/>
<dbReference type="EMBL" id="M33813">
    <property type="protein sequence ID" value="AAA25757.1"/>
    <property type="molecule type" value="Genomic_DNA"/>
</dbReference>
<dbReference type="PIR" id="C35124">
    <property type="entry name" value="C35124"/>
</dbReference>
<dbReference type="RefSeq" id="WP_062538125.1">
    <property type="nucleotide sequence ID" value="NZ_AP015030.1"/>
</dbReference>
<dbReference type="SMR" id="Q52036"/>
<dbReference type="ESTHER" id="psepu-bph">
    <property type="family name" value="Carbon-carbon_bond_hydrolase"/>
</dbReference>
<dbReference type="MEROPS" id="S33.016"/>
<dbReference type="UniPathway" id="UPA00155">
    <property type="reaction ID" value="UER00253"/>
</dbReference>
<dbReference type="GO" id="GO:0016020">
    <property type="term" value="C:membrane"/>
    <property type="evidence" value="ECO:0007669"/>
    <property type="project" value="TreeGrafter"/>
</dbReference>
<dbReference type="GO" id="GO:0018774">
    <property type="term" value="F:2,6-dioxo-6-phenylhexa-3-enoate hydrolase activity"/>
    <property type="evidence" value="ECO:0007669"/>
    <property type="project" value="RHEA"/>
</dbReference>
<dbReference type="GO" id="GO:0018771">
    <property type="term" value="F:2-hydroxy-6-oxonona-2,4-dienedioate hydrolase activity"/>
    <property type="evidence" value="ECO:0007669"/>
    <property type="project" value="UniProtKB-UniRule"/>
</dbReference>
<dbReference type="GO" id="GO:0047372">
    <property type="term" value="F:monoacylglycerol lipase activity"/>
    <property type="evidence" value="ECO:0007669"/>
    <property type="project" value="TreeGrafter"/>
</dbReference>
<dbReference type="GO" id="GO:0046464">
    <property type="term" value="P:acylglycerol catabolic process"/>
    <property type="evidence" value="ECO:0007669"/>
    <property type="project" value="TreeGrafter"/>
</dbReference>
<dbReference type="GO" id="GO:0070980">
    <property type="term" value="P:biphenyl catabolic process"/>
    <property type="evidence" value="ECO:0007669"/>
    <property type="project" value="UniProtKB-UniRule"/>
</dbReference>
<dbReference type="Gene3D" id="3.40.50.1820">
    <property type="entry name" value="alpha/beta hydrolase"/>
    <property type="match status" value="1"/>
</dbReference>
<dbReference type="HAMAP" id="MF_01688">
    <property type="entry name" value="Biphenyl_BphD"/>
    <property type="match status" value="1"/>
</dbReference>
<dbReference type="InterPro" id="IPR000073">
    <property type="entry name" value="AB_hydrolase_1"/>
</dbReference>
<dbReference type="InterPro" id="IPR029058">
    <property type="entry name" value="AB_hydrolase_fold"/>
</dbReference>
<dbReference type="InterPro" id="IPR050266">
    <property type="entry name" value="AB_hydrolase_sf"/>
</dbReference>
<dbReference type="InterPro" id="IPR000639">
    <property type="entry name" value="Epox_hydrolase-like"/>
</dbReference>
<dbReference type="InterPro" id="IPR017727">
    <property type="entry name" value="HOPD_hydrolase_BphD"/>
</dbReference>
<dbReference type="NCBIfam" id="TIGR03343">
    <property type="entry name" value="biphenyl_bphD"/>
    <property type="match status" value="1"/>
</dbReference>
<dbReference type="PANTHER" id="PTHR43798">
    <property type="entry name" value="MONOACYLGLYCEROL LIPASE"/>
    <property type="match status" value="1"/>
</dbReference>
<dbReference type="PANTHER" id="PTHR43798:SF5">
    <property type="entry name" value="MONOACYLGLYCEROL LIPASE ABHD6"/>
    <property type="match status" value="1"/>
</dbReference>
<dbReference type="Pfam" id="PF00561">
    <property type="entry name" value="Abhydrolase_1"/>
    <property type="match status" value="1"/>
</dbReference>
<dbReference type="PRINTS" id="PR00111">
    <property type="entry name" value="ABHYDROLASE"/>
</dbReference>
<dbReference type="PRINTS" id="PR00412">
    <property type="entry name" value="EPOXHYDRLASE"/>
</dbReference>
<dbReference type="SUPFAM" id="SSF53474">
    <property type="entry name" value="alpha/beta-Hydrolases"/>
    <property type="match status" value="1"/>
</dbReference>
<comment type="function">
    <text evidence="2">Catalyzes an unusual C-C bond hydrolysis of 2-hydroxy-6-oxo-6-phenylhexa-2,4-dienoic acid (HOPDA) to produce benzoic acid and 2-hydroxy-2,4-pentadienoic acid (HPD).</text>
</comment>
<comment type="catalytic activity">
    <reaction>
        <text>2,6-dioxo-6-phenylhexa-3-enoate + H2O = 2-oxopent-4-enoate + benzoate + H(+)</text>
        <dbReference type="Rhea" id="RHEA:17161"/>
        <dbReference type="ChEBI" id="CHEBI:11641"/>
        <dbReference type="ChEBI" id="CHEBI:15377"/>
        <dbReference type="ChEBI" id="CHEBI:15378"/>
        <dbReference type="ChEBI" id="CHEBI:16150"/>
        <dbReference type="ChEBI" id="CHEBI:64675"/>
        <dbReference type="EC" id="3.7.1.8"/>
    </reaction>
</comment>
<comment type="pathway">
    <text>Xenobiotic degradation; biphenyl degradation; 2-hydroxy-2,4-pentadienoate and benzoate from biphenyl: step 4/4.</text>
</comment>
<comment type="subunit">
    <text evidence="1">Homodimer.</text>
</comment>
<comment type="similarity">
    <text evidence="3">Belongs to the AB hydrolase superfamily. BphD family.</text>
</comment>
<evidence type="ECO:0000250" key="1"/>
<evidence type="ECO:0000269" key="2">
    <source>
    </source>
</evidence>
<evidence type="ECO:0000305" key="3"/>
<proteinExistence type="inferred from homology"/>
<protein>
    <recommendedName>
        <fullName>2-hydroxy-6-oxo-6-phenylhexa-2,4-dienoate hydrolase</fullName>
        <shortName>HOPDA hydrolase</shortName>
        <ecNumber>3.7.1.8</ecNumber>
    </recommendedName>
    <alternativeName>
        <fullName>2,6-dioxo-6-phenylhexa-3-enoate hydrolase</fullName>
    </alternativeName>
</protein>
<accession>Q52036</accession>
<name>BPHD_PSEPU</name>
<keyword id="KW-0058">Aromatic hydrocarbons catabolism</keyword>
<keyword id="KW-0378">Hydrolase</keyword>
<organism>
    <name type="scientific">Pseudomonas putida</name>
    <name type="common">Arthrobacter siderocapsulatus</name>
    <dbReference type="NCBI Taxonomy" id="303"/>
    <lineage>
        <taxon>Bacteria</taxon>
        <taxon>Pseudomonadati</taxon>
        <taxon>Pseudomonadota</taxon>
        <taxon>Gammaproteobacteria</taxon>
        <taxon>Pseudomonadales</taxon>
        <taxon>Pseudomonadaceae</taxon>
        <taxon>Pseudomonas</taxon>
    </lineage>
</organism>
<reference key="1">
    <citation type="journal article" date="1990" name="J. Bacteriol.">
        <title>Pseudomonas putida KF715 bphABCD operon encoding biphenyl and polychlorinated biphenyl degradation: cloning, analysis, and expression in soil bacteria.</title>
        <authorList>
            <person name="Hayase N."/>
            <person name="Taira K."/>
            <person name="Furukawa K."/>
        </authorList>
    </citation>
    <scope>NUCLEOTIDE SEQUENCE [GENOMIC DNA]</scope>
    <scope>FUNCTION</scope>
</reference>